<accession>P32024</accession>
<name>JI23_HORVU</name>
<reference key="1">
    <citation type="journal article" date="1992" name="Plant Mol. Biol.">
        <title>The identification of leaf thionin as one of the main jasmonate-induced proteins of barley (Hordeum vulgare).</title>
        <authorList>
            <person name="Andresen I."/>
            <person name="Becker W."/>
            <person name="Schluter K."/>
            <person name="Burges J."/>
            <person name="Parthier B."/>
            <person name="Apel K."/>
        </authorList>
    </citation>
    <scope>NUCLEOTIDE SEQUENCE [MRNA]</scope>
    <source>
        <strain>cv. Carina</strain>
    </source>
</reference>
<feature type="chain" id="PRO_0000084282" description="23 kDa jasmonate-induced protein">
    <location>
        <begin position="1"/>
        <end position="210"/>
    </location>
</feature>
<evidence type="ECO:0000305" key="1"/>
<proteinExistence type="evidence at transcript level"/>
<sequence>MASGVFGTPISAQTVIATGEYKEPITQKDVADYAMKMINAGGKDVNAQKFVDNLKERYGNGIAVKCLLYNATGATLNFAKYNDWHGHIYDTPYPSDIQNGQWGAFLHVHPSGAAAGSAGAVVYRSKIPSSSSSCDWLFSWTVPYIGGNGVYTEIREEGHYPSVGSWDYIYNVKLKNSSVTSIDSNYGYVSKADIGEGTTMNARGVFEFPY</sequence>
<organism>
    <name type="scientific">Hordeum vulgare</name>
    <name type="common">Barley</name>
    <dbReference type="NCBI Taxonomy" id="4513"/>
    <lineage>
        <taxon>Eukaryota</taxon>
        <taxon>Viridiplantae</taxon>
        <taxon>Streptophyta</taxon>
        <taxon>Embryophyta</taxon>
        <taxon>Tracheophyta</taxon>
        <taxon>Spermatophyta</taxon>
        <taxon>Magnoliopsida</taxon>
        <taxon>Liliopsida</taxon>
        <taxon>Poales</taxon>
        <taxon>Poaceae</taxon>
        <taxon>BOP clade</taxon>
        <taxon>Pooideae</taxon>
        <taxon>Triticodae</taxon>
        <taxon>Triticeae</taxon>
        <taxon>Hordeinae</taxon>
        <taxon>Hordeum</taxon>
    </lineage>
</organism>
<protein>
    <recommendedName>
        <fullName>23 kDa jasmonate-induced protein</fullName>
    </recommendedName>
</protein>
<dbReference type="PIR" id="S22514">
    <property type="entry name" value="S22514"/>
</dbReference>
<dbReference type="SMR" id="P32024"/>
<dbReference type="OMA" id="AYTEIHA"/>
<dbReference type="ExpressionAtlas" id="P32024">
    <property type="expression patterns" value="baseline and differential"/>
</dbReference>
<dbReference type="Gene3D" id="2.60.270.50">
    <property type="match status" value="1"/>
</dbReference>
<dbReference type="InterPro" id="IPR053085">
    <property type="entry name" value="Jasmonate-induced_protein"/>
</dbReference>
<dbReference type="InterPro" id="IPR049065">
    <property type="entry name" value="Nakanori"/>
</dbReference>
<dbReference type="PANTHER" id="PTHR36482:SF5">
    <property type="entry name" value="23 KDA JASMONATE-INDUCED PROTEIN-LIKE"/>
    <property type="match status" value="1"/>
</dbReference>
<dbReference type="PANTHER" id="PTHR36482">
    <property type="entry name" value="OSJNBA0024J22.15 PROTEIN"/>
    <property type="match status" value="1"/>
</dbReference>
<dbReference type="Pfam" id="PF21230">
    <property type="entry name" value="Nakanori"/>
    <property type="match status" value="1"/>
</dbReference>
<comment type="induction">
    <text>By jasmonate.</text>
</comment>
<comment type="similarity">
    <text evidence="1">Belongs to the jasmonate-induced protein family.</text>
</comment>